<proteinExistence type="inferred from homology"/>
<gene>
    <name type="primary">sdhE</name>
    <name type="ordered locus">VV2841</name>
</gene>
<dbReference type="EMBL" id="BA000037">
    <property type="protein sequence ID" value="BAC95605.1"/>
    <property type="molecule type" value="Genomic_DNA"/>
</dbReference>
<dbReference type="RefSeq" id="WP_011151170.1">
    <property type="nucleotide sequence ID" value="NC_005139.1"/>
</dbReference>
<dbReference type="SMR" id="Q7MHM8"/>
<dbReference type="STRING" id="672.VV93_v1c25490"/>
<dbReference type="KEGG" id="vvy:VV2841"/>
<dbReference type="PATRIC" id="fig|196600.6.peg.2829"/>
<dbReference type="eggNOG" id="COG2938">
    <property type="taxonomic scope" value="Bacteria"/>
</dbReference>
<dbReference type="HOGENOM" id="CLU_103054_2_2_6"/>
<dbReference type="Proteomes" id="UP000002675">
    <property type="component" value="Chromosome I"/>
</dbReference>
<dbReference type="GO" id="GO:0005737">
    <property type="term" value="C:cytoplasm"/>
    <property type="evidence" value="ECO:0007669"/>
    <property type="project" value="UniProtKB-SubCell"/>
</dbReference>
<dbReference type="GO" id="GO:0006105">
    <property type="term" value="P:succinate metabolic process"/>
    <property type="evidence" value="ECO:0007669"/>
    <property type="project" value="TreeGrafter"/>
</dbReference>
<dbReference type="FunFam" id="1.10.150.250:FF:000001">
    <property type="entry name" value="FAD assembly factor SdhE"/>
    <property type="match status" value="1"/>
</dbReference>
<dbReference type="Gene3D" id="1.10.150.250">
    <property type="entry name" value="Flavinator of succinate dehydrogenase"/>
    <property type="match status" value="1"/>
</dbReference>
<dbReference type="InterPro" id="IPR005631">
    <property type="entry name" value="SDH"/>
</dbReference>
<dbReference type="InterPro" id="IPR036714">
    <property type="entry name" value="SDH_sf"/>
</dbReference>
<dbReference type="InterPro" id="IPR050531">
    <property type="entry name" value="SdhE_FAD_assembly_factor"/>
</dbReference>
<dbReference type="PANTHER" id="PTHR39585">
    <property type="entry name" value="FAD ASSEMBLY FACTOR SDHE"/>
    <property type="match status" value="1"/>
</dbReference>
<dbReference type="PANTHER" id="PTHR39585:SF1">
    <property type="entry name" value="FAD ASSEMBLY FACTOR SDHE"/>
    <property type="match status" value="1"/>
</dbReference>
<dbReference type="Pfam" id="PF03937">
    <property type="entry name" value="Sdh5"/>
    <property type="match status" value="1"/>
</dbReference>
<dbReference type="SUPFAM" id="SSF109910">
    <property type="entry name" value="YgfY-like"/>
    <property type="match status" value="1"/>
</dbReference>
<reference key="1">
    <citation type="journal article" date="2003" name="Genome Res.">
        <title>Comparative genome analysis of Vibrio vulnificus, a marine pathogen.</title>
        <authorList>
            <person name="Chen C.-Y."/>
            <person name="Wu K.-M."/>
            <person name="Chang Y.-C."/>
            <person name="Chang C.-H."/>
            <person name="Tsai H.-C."/>
            <person name="Liao T.-L."/>
            <person name="Liu Y.-M."/>
            <person name="Chen H.-J."/>
            <person name="Shen A.B.-T."/>
            <person name="Li J.-C."/>
            <person name="Su T.-L."/>
            <person name="Shao C.-P."/>
            <person name="Lee C.-T."/>
            <person name="Hor L.-I."/>
            <person name="Tsai S.-F."/>
        </authorList>
    </citation>
    <scope>NUCLEOTIDE SEQUENCE [LARGE SCALE GENOMIC DNA]</scope>
    <source>
        <strain>YJ016</strain>
    </source>
</reference>
<evidence type="ECO:0000250" key="1">
    <source>
        <dbReference type="UniProtKB" id="G4V4G2"/>
    </source>
</evidence>
<evidence type="ECO:0000305" key="2"/>
<feature type="chain" id="PRO_0000214429" description="FAD assembly factor SdhE">
    <location>
        <begin position="1"/>
        <end position="86"/>
    </location>
</feature>
<sequence length="86" mass="10095">MYTTEEKARIRWACRRGMLELDVVVMPFFEECFDKLSEQEQRDFVSLLECDDPDLFTWVMGHGRSENLGHASMVDKIVAHNLSKVR</sequence>
<accession>Q7MHM8</accession>
<comment type="function">
    <text evidence="1">An FAD assembly protein, which accelerates covalent attachment of the cofactor into other proteins. Plays an essential role in the assembly of succinate dehydrogenase (SDH, respiratory complex II), an enzyme complex that is a component of both the tricarboxylic acid cycle and the electron transport chain, and which couples the oxidation of succinate to fumarate with the reduction of ubiquinone (coenzyme Q) to ubiquinol. Required for flavinylation (covalent attachment of FAD) of the flavoprotein subunit SdhA of SDH and other flavinylated proteins as well.</text>
</comment>
<comment type="subcellular location">
    <subcellularLocation>
        <location evidence="1">Cytoplasm</location>
    </subcellularLocation>
</comment>
<comment type="similarity">
    <text evidence="2">Belongs to the SdhE FAD assembly factor family.</text>
</comment>
<protein>
    <recommendedName>
        <fullName>FAD assembly factor SdhE</fullName>
    </recommendedName>
</protein>
<organism>
    <name type="scientific">Vibrio vulnificus (strain YJ016)</name>
    <dbReference type="NCBI Taxonomy" id="196600"/>
    <lineage>
        <taxon>Bacteria</taxon>
        <taxon>Pseudomonadati</taxon>
        <taxon>Pseudomonadota</taxon>
        <taxon>Gammaproteobacteria</taxon>
        <taxon>Vibrionales</taxon>
        <taxon>Vibrionaceae</taxon>
        <taxon>Vibrio</taxon>
    </lineage>
</organism>
<keyword id="KW-0143">Chaperone</keyword>
<keyword id="KW-0963">Cytoplasm</keyword>
<name>SDHE_VIBVY</name>